<name>HTPX_ECOBW</name>
<sequence length="293" mass="31923">MMRIALFLLTNLAVMVVFGLVLSLTGIQSSSVQGLMIMALLFGFGGSFVSLLMSKWMALRSVGGEVIEQPRNERERWLVNTVATQARQAGIAMPQVAIYHAPDINAFATGARRDASLVAVSTGLLQNMSPDEAEAVIAHEISHIANGDMVTMTLIQGVVNTFVIFISRILAQLAAGFMGGNRDEGEESNGNPLIYFAVATVLELVFGILASIITMWFSRHREFHADAGSAKLVGREKMIAALQRLKTSYEPQEATSMMALCINGKSKSLSELFMTHPPLDKRIEALRTGEYLK</sequence>
<protein>
    <recommendedName>
        <fullName evidence="1">Protease HtpX</fullName>
        <ecNumber evidence="1">3.4.24.-</ecNumber>
    </recommendedName>
    <alternativeName>
        <fullName evidence="1">Heat shock protein HtpX</fullName>
    </alternativeName>
</protein>
<accession>C4ZZI6</accession>
<keyword id="KW-0997">Cell inner membrane</keyword>
<keyword id="KW-1003">Cell membrane</keyword>
<keyword id="KW-0378">Hydrolase</keyword>
<keyword id="KW-0472">Membrane</keyword>
<keyword id="KW-0479">Metal-binding</keyword>
<keyword id="KW-0482">Metalloprotease</keyword>
<keyword id="KW-0645">Protease</keyword>
<keyword id="KW-0812">Transmembrane</keyword>
<keyword id="KW-1133">Transmembrane helix</keyword>
<keyword id="KW-0862">Zinc</keyword>
<comment type="cofactor">
    <cofactor evidence="1">
        <name>Zn(2+)</name>
        <dbReference type="ChEBI" id="CHEBI:29105"/>
    </cofactor>
    <text evidence="1">Binds 1 zinc ion per subunit.</text>
</comment>
<comment type="subcellular location">
    <subcellularLocation>
        <location evidence="1">Cell inner membrane</location>
        <topology evidence="1">Multi-pass membrane protein</topology>
    </subcellularLocation>
</comment>
<comment type="similarity">
    <text evidence="1">Belongs to the peptidase M48B family.</text>
</comment>
<evidence type="ECO:0000255" key="1">
    <source>
        <dbReference type="HAMAP-Rule" id="MF_00188"/>
    </source>
</evidence>
<dbReference type="EC" id="3.4.24.-" evidence="1"/>
<dbReference type="EMBL" id="CP001396">
    <property type="protein sequence ID" value="ACR64344.1"/>
    <property type="molecule type" value="Genomic_DNA"/>
</dbReference>
<dbReference type="RefSeq" id="WP_000984520.1">
    <property type="nucleotide sequence ID" value="NC_012759.1"/>
</dbReference>
<dbReference type="SMR" id="C4ZZI6"/>
<dbReference type="MEROPS" id="M48.002"/>
<dbReference type="KEGG" id="ebw:BWG_1643"/>
<dbReference type="HOGENOM" id="CLU_042266_1_0_6"/>
<dbReference type="GO" id="GO:0005886">
    <property type="term" value="C:plasma membrane"/>
    <property type="evidence" value="ECO:0007669"/>
    <property type="project" value="UniProtKB-SubCell"/>
</dbReference>
<dbReference type="GO" id="GO:0004222">
    <property type="term" value="F:metalloendopeptidase activity"/>
    <property type="evidence" value="ECO:0007669"/>
    <property type="project" value="UniProtKB-UniRule"/>
</dbReference>
<dbReference type="GO" id="GO:0008270">
    <property type="term" value="F:zinc ion binding"/>
    <property type="evidence" value="ECO:0007669"/>
    <property type="project" value="UniProtKB-UniRule"/>
</dbReference>
<dbReference type="GO" id="GO:0006508">
    <property type="term" value="P:proteolysis"/>
    <property type="evidence" value="ECO:0007669"/>
    <property type="project" value="UniProtKB-KW"/>
</dbReference>
<dbReference type="CDD" id="cd07335">
    <property type="entry name" value="M48B_HtpX_like"/>
    <property type="match status" value="1"/>
</dbReference>
<dbReference type="FunFam" id="3.30.2010.10:FF:000001">
    <property type="entry name" value="Protease HtpX"/>
    <property type="match status" value="1"/>
</dbReference>
<dbReference type="Gene3D" id="3.30.2010.10">
    <property type="entry name" value="Metalloproteases ('zincins'), catalytic domain"/>
    <property type="match status" value="1"/>
</dbReference>
<dbReference type="HAMAP" id="MF_00188">
    <property type="entry name" value="Pept_M48_protease_HtpX"/>
    <property type="match status" value="1"/>
</dbReference>
<dbReference type="InterPro" id="IPR050083">
    <property type="entry name" value="HtpX_protease"/>
</dbReference>
<dbReference type="InterPro" id="IPR022919">
    <property type="entry name" value="Pept_M48_protease_HtpX"/>
</dbReference>
<dbReference type="InterPro" id="IPR001915">
    <property type="entry name" value="Peptidase_M48"/>
</dbReference>
<dbReference type="NCBIfam" id="NF003965">
    <property type="entry name" value="PRK05457.1"/>
    <property type="match status" value="1"/>
</dbReference>
<dbReference type="PANTHER" id="PTHR43221">
    <property type="entry name" value="PROTEASE HTPX"/>
    <property type="match status" value="1"/>
</dbReference>
<dbReference type="PANTHER" id="PTHR43221:SF1">
    <property type="entry name" value="PROTEASE HTPX"/>
    <property type="match status" value="1"/>
</dbReference>
<dbReference type="Pfam" id="PF01435">
    <property type="entry name" value="Peptidase_M48"/>
    <property type="match status" value="1"/>
</dbReference>
<organism>
    <name type="scientific">Escherichia coli (strain K12 / MC4100 / BW2952)</name>
    <dbReference type="NCBI Taxonomy" id="595496"/>
    <lineage>
        <taxon>Bacteria</taxon>
        <taxon>Pseudomonadati</taxon>
        <taxon>Pseudomonadota</taxon>
        <taxon>Gammaproteobacteria</taxon>
        <taxon>Enterobacterales</taxon>
        <taxon>Enterobacteriaceae</taxon>
        <taxon>Escherichia</taxon>
    </lineage>
</organism>
<gene>
    <name evidence="1" type="primary">htpX</name>
    <name type="ordered locus">BWG_1643</name>
</gene>
<reference key="1">
    <citation type="journal article" date="2009" name="J. Bacteriol.">
        <title>Genomic sequencing reveals regulatory mutations and recombinational events in the widely used MC4100 lineage of Escherichia coli K-12.</title>
        <authorList>
            <person name="Ferenci T."/>
            <person name="Zhou Z."/>
            <person name="Betteridge T."/>
            <person name="Ren Y."/>
            <person name="Liu Y."/>
            <person name="Feng L."/>
            <person name="Reeves P.R."/>
            <person name="Wang L."/>
        </authorList>
    </citation>
    <scope>NUCLEOTIDE SEQUENCE [LARGE SCALE GENOMIC DNA]</scope>
    <source>
        <strain>K12 / MC4100 / BW2952</strain>
    </source>
</reference>
<feature type="chain" id="PRO_1000203973" description="Protease HtpX">
    <location>
        <begin position="1"/>
        <end position="293"/>
    </location>
</feature>
<feature type="transmembrane region" description="Helical" evidence="1">
    <location>
        <begin position="4"/>
        <end position="24"/>
    </location>
</feature>
<feature type="transmembrane region" description="Helical" evidence="1">
    <location>
        <begin position="34"/>
        <end position="54"/>
    </location>
</feature>
<feature type="transmembrane region" description="Helical" evidence="1">
    <location>
        <begin position="158"/>
        <end position="178"/>
    </location>
</feature>
<feature type="transmembrane region" description="Helical" evidence="1">
    <location>
        <begin position="193"/>
        <end position="213"/>
    </location>
</feature>
<feature type="active site" evidence="1">
    <location>
        <position position="140"/>
    </location>
</feature>
<feature type="binding site" evidence="1">
    <location>
        <position position="139"/>
    </location>
    <ligand>
        <name>Zn(2+)</name>
        <dbReference type="ChEBI" id="CHEBI:29105"/>
        <note>catalytic</note>
    </ligand>
</feature>
<feature type="binding site" evidence="1">
    <location>
        <position position="143"/>
    </location>
    <ligand>
        <name>Zn(2+)</name>
        <dbReference type="ChEBI" id="CHEBI:29105"/>
        <note>catalytic</note>
    </ligand>
</feature>
<feature type="binding site" evidence="1">
    <location>
        <position position="222"/>
    </location>
    <ligand>
        <name>Zn(2+)</name>
        <dbReference type="ChEBI" id="CHEBI:29105"/>
        <note>catalytic</note>
    </ligand>
</feature>
<proteinExistence type="inferred from homology"/>